<name>NR1I3_HUMAN</name>
<keyword id="KW-0002">3D-structure</keyword>
<keyword id="KW-0010">Activator</keyword>
<keyword id="KW-0025">Alternative splicing</keyword>
<keyword id="KW-0963">Cytoplasm</keyword>
<keyword id="KW-0206">Cytoskeleton</keyword>
<keyword id="KW-0238">DNA-binding</keyword>
<keyword id="KW-0479">Metal-binding</keyword>
<keyword id="KW-0539">Nucleus</keyword>
<keyword id="KW-0597">Phosphoprotein</keyword>
<keyword id="KW-1267">Proteomics identification</keyword>
<keyword id="KW-0675">Receptor</keyword>
<keyword id="KW-1185">Reference proteome</keyword>
<keyword id="KW-0804">Transcription</keyword>
<keyword id="KW-0805">Transcription regulation</keyword>
<keyword id="KW-0862">Zinc</keyword>
<keyword id="KW-0863">Zinc-finger</keyword>
<accession>Q14994</accession>
<accession>E9PB75</accession>
<accession>E9PC13</accession>
<accession>E9PDU3</accession>
<accession>E9PGH6</accession>
<accession>E9PH10</accession>
<accession>E9PHC8</accession>
<accession>E9PHN4</accession>
<accession>F1D8Q0</accession>
<accession>F1D8Q1</accession>
<accession>Q0VAC9</accession>
<accession>Q4U0F0</accession>
<accession>Q5VTW5</accession>
<accession>Q5VTW6</accession>
<accession>Q6GZ68</accession>
<accession>Q6GZ76</accession>
<accession>Q6GZ77</accession>
<accession>Q6GZ78</accession>
<accession>Q6GZ79</accession>
<accession>Q6GZ82</accession>
<accession>Q6GZ83</accession>
<accession>Q6GZ84</accession>
<accession>Q6GZ85</accession>
<accession>Q6GZ87</accession>
<accession>Q6GZ89</accession>
<dbReference type="EMBL" id="Z30425">
    <property type="protein sequence ID" value="CAA83016.1"/>
    <property type="molecule type" value="mRNA"/>
</dbReference>
<dbReference type="EMBL" id="AY572806">
    <property type="protein sequence ID" value="AAT47159.1"/>
    <property type="molecule type" value="mRNA"/>
</dbReference>
<dbReference type="EMBL" id="AY572808">
    <property type="protein sequence ID" value="AAT47161.1"/>
    <property type="molecule type" value="mRNA"/>
</dbReference>
<dbReference type="EMBL" id="AY572810">
    <property type="protein sequence ID" value="AAT47163.1"/>
    <property type="molecule type" value="mRNA"/>
</dbReference>
<dbReference type="EMBL" id="AY572811">
    <property type="protein sequence ID" value="AAT47164.1"/>
    <property type="molecule type" value="mRNA"/>
</dbReference>
<dbReference type="EMBL" id="AY572812">
    <property type="protein sequence ID" value="AAT47165.1"/>
    <property type="molecule type" value="mRNA"/>
</dbReference>
<dbReference type="EMBL" id="AY572813">
    <property type="protein sequence ID" value="AAT47166.1"/>
    <property type="molecule type" value="mRNA"/>
</dbReference>
<dbReference type="EMBL" id="AY572816">
    <property type="protein sequence ID" value="AAT47169.1"/>
    <property type="molecule type" value="mRNA"/>
</dbReference>
<dbReference type="EMBL" id="AY572817">
    <property type="protein sequence ID" value="AAT47170.1"/>
    <property type="molecule type" value="mRNA"/>
</dbReference>
<dbReference type="EMBL" id="AY572818">
    <property type="protein sequence ID" value="AAT47171.1"/>
    <property type="molecule type" value="mRNA"/>
</dbReference>
<dbReference type="EMBL" id="AY572819">
    <property type="protein sequence ID" value="AAT47172.1"/>
    <property type="molecule type" value="mRNA"/>
</dbReference>
<dbReference type="EMBL" id="AY572827">
    <property type="protein sequence ID" value="AAT47180.1"/>
    <property type="molecule type" value="mRNA"/>
</dbReference>
<dbReference type="EMBL" id="DQ022681">
    <property type="protein sequence ID" value="AAY56401.1"/>
    <property type="molecule type" value="mRNA"/>
</dbReference>
<dbReference type="EMBL" id="HQ692838">
    <property type="protein sequence ID" value="ADZ17349.1"/>
    <property type="molecule type" value="mRNA"/>
</dbReference>
<dbReference type="EMBL" id="HQ692839">
    <property type="protein sequence ID" value="ADZ17350.1"/>
    <property type="molecule type" value="mRNA"/>
</dbReference>
<dbReference type="EMBL" id="HQ692840">
    <property type="protein sequence ID" value="ADZ17351.1"/>
    <property type="molecule type" value="mRNA"/>
</dbReference>
<dbReference type="EMBL" id="HQ692841">
    <property type="protein sequence ID" value="ADZ17352.1"/>
    <property type="molecule type" value="mRNA"/>
</dbReference>
<dbReference type="EMBL" id="AL590714">
    <property type="status" value="NOT_ANNOTATED_CDS"/>
    <property type="molecule type" value="Genomic_DNA"/>
</dbReference>
<dbReference type="EMBL" id="CH471121">
    <property type="protein sequence ID" value="EAW52608.1"/>
    <property type="molecule type" value="Genomic_DNA"/>
</dbReference>
<dbReference type="EMBL" id="CH471121">
    <property type="protein sequence ID" value="EAW52609.1"/>
    <property type="molecule type" value="Genomic_DNA"/>
</dbReference>
<dbReference type="EMBL" id="BC069626">
    <property type="protein sequence ID" value="AAH69626.1"/>
    <property type="molecule type" value="mRNA"/>
</dbReference>
<dbReference type="EMBL" id="BC121120">
    <property type="protein sequence ID" value="AAI21121.1"/>
    <property type="molecule type" value="mRNA"/>
</dbReference>
<dbReference type="EMBL" id="BC121121">
    <property type="protein sequence ID" value="AAI21122.1"/>
    <property type="molecule type" value="mRNA"/>
</dbReference>
<dbReference type="CCDS" id="CCDS1228.1">
    <molecule id="Q14994-2"/>
</dbReference>
<dbReference type="CCDS" id="CCDS41427.1">
    <molecule id="Q14994-6"/>
</dbReference>
<dbReference type="CCDS" id="CCDS41428.1">
    <molecule id="Q14994-3"/>
</dbReference>
<dbReference type="CCDS" id="CCDS41429.1">
    <molecule id="Q14994-8"/>
</dbReference>
<dbReference type="CCDS" id="CCDS41430.1">
    <molecule id="Q14994-1"/>
</dbReference>
<dbReference type="CCDS" id="CCDS44260.1">
    <molecule id="Q14994-12"/>
</dbReference>
<dbReference type="CCDS" id="CCDS44261.1">
    <molecule id="Q14994-13"/>
</dbReference>
<dbReference type="CCDS" id="CCDS44262.1">
    <molecule id="Q14994-7"/>
</dbReference>
<dbReference type="CCDS" id="CCDS53405.1">
    <molecule id="Q14994-15"/>
</dbReference>
<dbReference type="CCDS" id="CCDS53406.1">
    <molecule id="Q14994-16"/>
</dbReference>
<dbReference type="CCDS" id="CCDS53407.1">
    <molecule id="Q14994-4"/>
</dbReference>
<dbReference type="CCDS" id="CCDS53408.1">
    <molecule id="Q14994-9"/>
</dbReference>
<dbReference type="CCDS" id="CCDS53409.1">
    <molecule id="Q14994-5"/>
</dbReference>
<dbReference type="CCDS" id="CCDS53410.1">
    <molecule id="Q14994-10"/>
</dbReference>
<dbReference type="CCDS" id="CCDS53411.1">
    <molecule id="Q14994-11"/>
</dbReference>
<dbReference type="PIR" id="A56197">
    <property type="entry name" value="A56197"/>
</dbReference>
<dbReference type="RefSeq" id="NP_001070937.1">
    <molecule id="Q14994-13"/>
    <property type="nucleotide sequence ID" value="NM_001077469.3"/>
</dbReference>
<dbReference type="RefSeq" id="NP_001070938.1">
    <molecule id="Q14994-4"/>
    <property type="nucleotide sequence ID" value="NM_001077470.3"/>
</dbReference>
<dbReference type="RefSeq" id="NP_001070939.1">
    <molecule id="Q14994-7"/>
    <property type="nucleotide sequence ID" value="NM_001077471.3"/>
</dbReference>
<dbReference type="RefSeq" id="NP_001070940.1">
    <molecule id="Q14994-6"/>
    <property type="nucleotide sequence ID" value="NM_001077472.3"/>
</dbReference>
<dbReference type="RefSeq" id="NP_001070941.1">
    <molecule id="Q14994-11"/>
    <property type="nucleotide sequence ID" value="NM_001077473.3"/>
</dbReference>
<dbReference type="RefSeq" id="NP_001070942.1">
    <molecule id="Q14994-15"/>
    <property type="nucleotide sequence ID" value="NM_001077474.3"/>
</dbReference>
<dbReference type="RefSeq" id="NP_001070943.1">
    <molecule id="Q14994-16"/>
    <property type="nucleotide sequence ID" value="NM_001077475.3"/>
</dbReference>
<dbReference type="RefSeq" id="NP_001070944.1">
    <molecule id="Q14994-10"/>
    <property type="nucleotide sequence ID" value="NM_001077476.3"/>
</dbReference>
<dbReference type="RefSeq" id="NP_001070945.1">
    <molecule id="Q14994-9"/>
    <property type="nucleotide sequence ID" value="NM_001077477.3"/>
</dbReference>
<dbReference type="RefSeq" id="NP_001070946.1">
    <molecule id="Q14994-12"/>
    <property type="nucleotide sequence ID" value="NM_001077478.3"/>
</dbReference>
<dbReference type="RefSeq" id="NP_001070947.1">
    <molecule id="Q14994-5"/>
    <property type="nucleotide sequence ID" value="NM_001077479.3"/>
</dbReference>
<dbReference type="RefSeq" id="NP_001070948.1">
    <molecule id="Q14994-1"/>
    <property type="nucleotide sequence ID" value="NM_001077480.3"/>
</dbReference>
<dbReference type="RefSeq" id="NP_001070949.1">
    <molecule id="Q14994-3"/>
    <property type="nucleotide sequence ID" value="NM_001077481.3"/>
</dbReference>
<dbReference type="RefSeq" id="NP_001070950.1">
    <molecule id="Q14994-8"/>
    <property type="nucleotide sequence ID" value="NM_001077482.3"/>
</dbReference>
<dbReference type="RefSeq" id="NP_005113.1">
    <molecule id="Q14994-2"/>
    <property type="nucleotide sequence ID" value="NM_005122.5"/>
</dbReference>
<dbReference type="PDB" id="1XV9">
    <property type="method" value="X-ray"/>
    <property type="resolution" value="2.70 A"/>
    <property type="chains" value="B/D=103-352"/>
</dbReference>
<dbReference type="PDB" id="1XVP">
    <property type="method" value="X-ray"/>
    <property type="resolution" value="2.60 A"/>
    <property type="chains" value="B/D=103-352"/>
</dbReference>
<dbReference type="PDBsum" id="1XV9"/>
<dbReference type="PDBsum" id="1XVP"/>
<dbReference type="SASBDB" id="Q14994"/>
<dbReference type="SMR" id="Q14994"/>
<dbReference type="BioGRID" id="115295">
    <property type="interactions" value="40"/>
</dbReference>
<dbReference type="CORUM" id="Q14994"/>
<dbReference type="FunCoup" id="Q14994">
    <property type="interactions" value="761"/>
</dbReference>
<dbReference type="IntAct" id="Q14994">
    <property type="interactions" value="23"/>
</dbReference>
<dbReference type="STRING" id="9606.ENSP00000356959"/>
<dbReference type="BindingDB" id="Q14994"/>
<dbReference type="ChEMBL" id="CHEMBL5503"/>
<dbReference type="DrugBank" id="DB01889">
    <property type="generic name" value="16,17-Androstene-3-Ol"/>
</dbReference>
<dbReference type="DrugBank" id="DB07557">
    <property type="generic name" value="3,20-Pregnanedione"/>
</dbReference>
<dbReference type="DrugBank" id="DB01076">
    <property type="generic name" value="Atorvastatin"/>
</dbReference>
<dbReference type="DrugBank" id="DB04540">
    <property type="generic name" value="Cholesterol"/>
</dbReference>
<dbReference type="DrugBank" id="DB00366">
    <property type="generic name" value="Doxylamine"/>
</dbReference>
<dbReference type="DrugBank" id="DB07931">
    <property type="generic name" value="Hexestrol"/>
</dbReference>
<dbReference type="DrugBank" id="DB01026">
    <property type="generic name" value="Ketoconazole"/>
</dbReference>
<dbReference type="DrugBank" id="DB00737">
    <property type="generic name" value="Meclizine"/>
</dbReference>
<dbReference type="DrugBank" id="DB01620">
    <property type="generic name" value="Pheniramine"/>
</dbReference>
<dbReference type="DrugBank" id="DB04824">
    <property type="generic name" value="Phenolphthalein"/>
</dbReference>
<dbReference type="DrugBank" id="DB01708">
    <property type="generic name" value="Prasterone"/>
</dbReference>
<dbReference type="DrugBank" id="DB02709">
    <property type="generic name" value="Resveratrol"/>
</dbReference>
<dbReference type="DrugBank" id="DB08604">
    <property type="generic name" value="Triclosan"/>
</dbReference>
<dbReference type="DrugCentral" id="Q14994"/>
<dbReference type="GuidetoPHARMACOLOGY" id="607"/>
<dbReference type="SwissLipids" id="SLP:000001585"/>
<dbReference type="GlyGen" id="Q14994">
    <property type="glycosylation" value="2 sites"/>
</dbReference>
<dbReference type="iPTMnet" id="Q14994"/>
<dbReference type="PhosphoSitePlus" id="Q14994"/>
<dbReference type="BioMuta" id="NR1I3"/>
<dbReference type="DMDM" id="49066046"/>
<dbReference type="jPOST" id="Q14994"/>
<dbReference type="MassIVE" id="Q14994"/>
<dbReference type="PaxDb" id="9606-ENSP00000356959"/>
<dbReference type="PeptideAtlas" id="Q14994"/>
<dbReference type="ProteomicsDB" id="19747"/>
<dbReference type="ProteomicsDB" id="20507"/>
<dbReference type="ProteomicsDB" id="60278">
    <molecule id="Q14994-1"/>
</dbReference>
<dbReference type="ProteomicsDB" id="60279">
    <molecule id="Q14994-2"/>
</dbReference>
<dbReference type="ProteomicsDB" id="60280">
    <molecule id="Q14994-3"/>
</dbReference>
<dbReference type="ProteomicsDB" id="60281">
    <molecule id="Q14994-4"/>
</dbReference>
<dbReference type="ProteomicsDB" id="60282">
    <molecule id="Q14994-5"/>
</dbReference>
<dbReference type="ProteomicsDB" id="60283">
    <molecule id="Q14994-6"/>
</dbReference>
<dbReference type="ProteomicsDB" id="60284">
    <molecule id="Q14994-7"/>
</dbReference>
<dbReference type="ProteomicsDB" id="62261"/>
<dbReference type="Antibodypedia" id="20508">
    <property type="antibodies" value="472 antibodies from 32 providers"/>
</dbReference>
<dbReference type="DNASU" id="9970"/>
<dbReference type="Ensembl" id="ENST00000367979.6">
    <molecule id="Q14994-8"/>
    <property type="protein sequence ID" value="ENSP00000356958.2"/>
    <property type="gene ID" value="ENSG00000143257.12"/>
</dbReference>
<dbReference type="Ensembl" id="ENST00000367980.6">
    <molecule id="Q14994-8"/>
    <property type="protein sequence ID" value="ENSP00000356959.2"/>
    <property type="gene ID" value="ENSG00000143257.12"/>
</dbReference>
<dbReference type="Ensembl" id="ENST00000367981.7">
    <molecule id="Q14994-6"/>
    <property type="protein sequence ID" value="ENSP00000356960.3"/>
    <property type="gene ID" value="ENSG00000143257.12"/>
</dbReference>
<dbReference type="Ensembl" id="ENST00000367982.8">
    <molecule id="Q14994-1"/>
    <property type="protein sequence ID" value="ENSP00000356961.4"/>
    <property type="gene ID" value="ENSG00000143257.12"/>
</dbReference>
<dbReference type="Ensembl" id="ENST00000367983.9">
    <molecule id="Q14994-2"/>
    <property type="protein sequence ID" value="ENSP00000356962.5"/>
    <property type="gene ID" value="ENSG00000143257.12"/>
</dbReference>
<dbReference type="Ensembl" id="ENST00000367984.8">
    <molecule id="Q14994-7"/>
    <property type="protein sequence ID" value="ENSP00000356963.4"/>
    <property type="gene ID" value="ENSG00000143257.12"/>
</dbReference>
<dbReference type="Ensembl" id="ENST00000367985.7">
    <molecule id="Q14994-3"/>
    <property type="protein sequence ID" value="ENSP00000356965.3"/>
    <property type="gene ID" value="ENSG00000143257.12"/>
</dbReference>
<dbReference type="Ensembl" id="ENST00000412844.6">
    <molecule id="Q14994-11"/>
    <property type="protein sequence ID" value="ENSP00000399361.2"/>
    <property type="gene ID" value="ENSG00000143257.12"/>
</dbReference>
<dbReference type="Ensembl" id="ENST00000428574.6">
    <molecule id="Q14994-13"/>
    <property type="protein sequence ID" value="ENSP00000412672.2"/>
    <property type="gene ID" value="ENSG00000143257.12"/>
</dbReference>
<dbReference type="Ensembl" id="ENST00000437437.6">
    <molecule id="Q14994-9"/>
    <property type="protein sequence ID" value="ENSP00000407446.2"/>
    <property type="gene ID" value="ENSG00000143257.12"/>
</dbReference>
<dbReference type="Ensembl" id="ENST00000442691.6">
    <molecule id="Q14994-12"/>
    <property type="protein sequence ID" value="ENSP00000406493.2"/>
    <property type="gene ID" value="ENSG00000143257.12"/>
</dbReference>
<dbReference type="Ensembl" id="ENST00000504010.5">
    <molecule id="Q14994-4"/>
    <property type="protein sequence ID" value="ENSP00000424345.1"/>
    <property type="gene ID" value="ENSG00000143257.12"/>
</dbReference>
<dbReference type="Ensembl" id="ENST00000505005.5">
    <molecule id="Q14994-15"/>
    <property type="protein sequence ID" value="ENSP00000424934.1"/>
    <property type="gene ID" value="ENSG00000143257.12"/>
</dbReference>
<dbReference type="Ensembl" id="ENST00000508740.5">
    <molecule id="Q14994-10"/>
    <property type="protein sequence ID" value="ENSP00000423666.1"/>
    <property type="gene ID" value="ENSG00000143257.12"/>
</dbReference>
<dbReference type="Ensembl" id="ENST00000511676.5">
    <molecule id="Q14994-5"/>
    <property type="protein sequence ID" value="ENSP00000427175.1"/>
    <property type="gene ID" value="ENSG00000143257.12"/>
</dbReference>
<dbReference type="Ensembl" id="ENST00000512372.5">
    <molecule id="Q14994-16"/>
    <property type="protein sequence ID" value="ENSP00000425417.1"/>
    <property type="gene ID" value="ENSG00000143257.12"/>
</dbReference>
<dbReference type="GeneID" id="9970"/>
<dbReference type="KEGG" id="hsa:9970"/>
<dbReference type="MANE-Select" id="ENST00000367983.9">
    <molecule id="Q14994-2"/>
    <property type="protein sequence ID" value="ENSP00000356962.5"/>
    <property type="RefSeq nucleotide sequence ID" value="NM_005122.5"/>
    <property type="RefSeq protein sequence ID" value="NP_005113.1"/>
</dbReference>
<dbReference type="UCSC" id="uc001fzf.4">
    <molecule id="Q14994-1"/>
    <property type="organism name" value="human"/>
</dbReference>
<dbReference type="AGR" id="HGNC:7969"/>
<dbReference type="CTD" id="9970"/>
<dbReference type="DisGeNET" id="9970"/>
<dbReference type="GeneCards" id="NR1I3"/>
<dbReference type="HGNC" id="HGNC:7969">
    <property type="gene designation" value="NR1I3"/>
</dbReference>
<dbReference type="HPA" id="ENSG00000143257">
    <property type="expression patterns" value="Tissue enriched (liver)"/>
</dbReference>
<dbReference type="MIM" id="603881">
    <property type="type" value="gene"/>
</dbReference>
<dbReference type="neXtProt" id="NX_Q14994"/>
<dbReference type="OpenTargets" id="ENSG00000143257"/>
<dbReference type="PharmGKB" id="PA391"/>
<dbReference type="VEuPathDB" id="HostDB:ENSG00000143257"/>
<dbReference type="eggNOG" id="KOG3575">
    <property type="taxonomic scope" value="Eukaryota"/>
</dbReference>
<dbReference type="GeneTree" id="ENSGT00940000160641"/>
<dbReference type="HOGENOM" id="CLU_007368_12_0_1"/>
<dbReference type="InParanoid" id="Q14994"/>
<dbReference type="OMA" id="VHAGFQE"/>
<dbReference type="OrthoDB" id="6355676at2759"/>
<dbReference type="PAN-GO" id="Q14994">
    <property type="GO annotations" value="5 GO annotations based on evolutionary models"/>
</dbReference>
<dbReference type="PhylomeDB" id="Q14994"/>
<dbReference type="TreeFam" id="TF316304"/>
<dbReference type="PathwayCommons" id="Q14994"/>
<dbReference type="Reactome" id="R-HSA-383280">
    <property type="pathway name" value="Nuclear Receptor transcription pathway"/>
</dbReference>
<dbReference type="SignaLink" id="Q14994"/>
<dbReference type="SIGNOR" id="Q14994"/>
<dbReference type="BioGRID-ORCS" id="9970">
    <property type="hits" value="15 hits in 1174 CRISPR screens"/>
</dbReference>
<dbReference type="ChiTaRS" id="NR1I3">
    <property type="organism name" value="human"/>
</dbReference>
<dbReference type="EvolutionaryTrace" id="Q14994"/>
<dbReference type="GeneWiki" id="Constitutive_androstane_receptor"/>
<dbReference type="GenomeRNAi" id="9970"/>
<dbReference type="Pharos" id="Q14994">
    <property type="development level" value="Tchem"/>
</dbReference>
<dbReference type="PRO" id="PR:Q14994"/>
<dbReference type="Proteomes" id="UP000005640">
    <property type="component" value="Chromosome 1"/>
</dbReference>
<dbReference type="RNAct" id="Q14994">
    <property type="molecule type" value="protein"/>
</dbReference>
<dbReference type="Bgee" id="ENSG00000143257">
    <property type="expression patterns" value="Expressed in right lobe of liver and 100 other cell types or tissues"/>
</dbReference>
<dbReference type="ExpressionAtlas" id="Q14994">
    <property type="expression patterns" value="baseline and differential"/>
</dbReference>
<dbReference type="GO" id="GO:0000785">
    <property type="term" value="C:chromatin"/>
    <property type="evidence" value="ECO:0000247"/>
    <property type="project" value="NTNU_SB"/>
</dbReference>
<dbReference type="GO" id="GO:0005737">
    <property type="term" value="C:cytoplasm"/>
    <property type="evidence" value="ECO:0000250"/>
    <property type="project" value="UniProtKB"/>
</dbReference>
<dbReference type="GO" id="GO:0005856">
    <property type="term" value="C:cytoskeleton"/>
    <property type="evidence" value="ECO:0007669"/>
    <property type="project" value="UniProtKB-SubCell"/>
</dbReference>
<dbReference type="GO" id="GO:0005829">
    <property type="term" value="C:cytosol"/>
    <property type="evidence" value="ECO:0007669"/>
    <property type="project" value="Ensembl"/>
</dbReference>
<dbReference type="GO" id="GO:0005654">
    <property type="term" value="C:nucleoplasm"/>
    <property type="evidence" value="ECO:0000314"/>
    <property type="project" value="HPA"/>
</dbReference>
<dbReference type="GO" id="GO:0005634">
    <property type="term" value="C:nucleus"/>
    <property type="evidence" value="ECO:0000250"/>
    <property type="project" value="UniProtKB"/>
</dbReference>
<dbReference type="GO" id="GO:0001228">
    <property type="term" value="F:DNA-binding transcription activator activity, RNA polymerase II-specific"/>
    <property type="evidence" value="ECO:0000314"/>
    <property type="project" value="NTNU_SB"/>
</dbReference>
<dbReference type="GO" id="GO:0003700">
    <property type="term" value="F:DNA-binding transcription factor activity"/>
    <property type="evidence" value="ECO:0000304"/>
    <property type="project" value="ProtInc"/>
</dbReference>
<dbReference type="GO" id="GO:0000981">
    <property type="term" value="F:DNA-binding transcription factor activity, RNA polymerase II-specific"/>
    <property type="evidence" value="ECO:0000247"/>
    <property type="project" value="NTNU_SB"/>
</dbReference>
<dbReference type="GO" id="GO:0004879">
    <property type="term" value="F:nuclear receptor activity"/>
    <property type="evidence" value="ECO:0000314"/>
    <property type="project" value="GO_Central"/>
</dbReference>
<dbReference type="GO" id="GO:0000978">
    <property type="term" value="F:RNA polymerase II cis-regulatory region sequence-specific DNA binding"/>
    <property type="evidence" value="ECO:0000318"/>
    <property type="project" value="GO_Central"/>
</dbReference>
<dbReference type="GO" id="GO:0000977">
    <property type="term" value="F:RNA polymerase II transcription regulatory region sequence-specific DNA binding"/>
    <property type="evidence" value="ECO:0000314"/>
    <property type="project" value="NTNU_SB"/>
</dbReference>
<dbReference type="GO" id="GO:1990837">
    <property type="term" value="F:sequence-specific double-stranded DNA binding"/>
    <property type="evidence" value="ECO:0000314"/>
    <property type="project" value="ARUK-UCL"/>
</dbReference>
<dbReference type="GO" id="GO:0008270">
    <property type="term" value="F:zinc ion binding"/>
    <property type="evidence" value="ECO:0007669"/>
    <property type="project" value="UniProtKB-KW"/>
</dbReference>
<dbReference type="GO" id="GO:0030154">
    <property type="term" value="P:cell differentiation"/>
    <property type="evidence" value="ECO:0000318"/>
    <property type="project" value="GO_Central"/>
</dbReference>
<dbReference type="GO" id="GO:0030522">
    <property type="term" value="P:intracellular receptor signaling pathway"/>
    <property type="evidence" value="ECO:0000318"/>
    <property type="project" value="GO_Central"/>
</dbReference>
<dbReference type="GO" id="GO:0000122">
    <property type="term" value="P:negative regulation of transcription by RNA polymerase II"/>
    <property type="evidence" value="ECO:0000318"/>
    <property type="project" value="GO_Central"/>
</dbReference>
<dbReference type="GO" id="GO:0001649">
    <property type="term" value="P:osteoblast differentiation"/>
    <property type="evidence" value="ECO:0007669"/>
    <property type="project" value="Ensembl"/>
</dbReference>
<dbReference type="GO" id="GO:0045944">
    <property type="term" value="P:positive regulation of transcription by RNA polymerase II"/>
    <property type="evidence" value="ECO:0000314"/>
    <property type="project" value="NTNU_SB"/>
</dbReference>
<dbReference type="GO" id="GO:0007165">
    <property type="term" value="P:signal transduction"/>
    <property type="evidence" value="ECO:0000304"/>
    <property type="project" value="ProtInc"/>
</dbReference>
<dbReference type="CDD" id="cd07156">
    <property type="entry name" value="NR_DBD_VDR_like"/>
    <property type="match status" value="1"/>
</dbReference>
<dbReference type="CDD" id="cd06934">
    <property type="entry name" value="NR_LBD_PXR_like"/>
    <property type="match status" value="1"/>
</dbReference>
<dbReference type="FunFam" id="1.10.565.10:FF:000025">
    <property type="entry name" value="Nuclear receptor subfamily 1 group I member 3"/>
    <property type="match status" value="1"/>
</dbReference>
<dbReference type="FunFam" id="3.30.50.10:FF:000035">
    <property type="entry name" value="Nuclear receptor subfamily 1 group I member 3"/>
    <property type="match status" value="1"/>
</dbReference>
<dbReference type="Gene3D" id="3.30.50.10">
    <property type="entry name" value="Erythroid Transcription Factor GATA-1, subunit A"/>
    <property type="match status" value="1"/>
</dbReference>
<dbReference type="Gene3D" id="1.10.565.10">
    <property type="entry name" value="Retinoid X Receptor"/>
    <property type="match status" value="1"/>
</dbReference>
<dbReference type="IDEAL" id="IID00475"/>
<dbReference type="InterPro" id="IPR035500">
    <property type="entry name" value="NHR-like_dom_sf"/>
</dbReference>
<dbReference type="InterPro" id="IPR000536">
    <property type="entry name" value="Nucl_hrmn_rcpt_lig-bd"/>
</dbReference>
<dbReference type="InterPro" id="IPR050234">
    <property type="entry name" value="Nuclear_hormone_rcpt_NR1"/>
</dbReference>
<dbReference type="InterPro" id="IPR001723">
    <property type="entry name" value="Nuclear_hrmn_rcpt"/>
</dbReference>
<dbReference type="InterPro" id="IPR001728">
    <property type="entry name" value="ThyrH_rcpt"/>
</dbReference>
<dbReference type="InterPro" id="IPR001628">
    <property type="entry name" value="Znf_hrmn_rcpt"/>
</dbReference>
<dbReference type="InterPro" id="IPR013088">
    <property type="entry name" value="Znf_NHR/GATA"/>
</dbReference>
<dbReference type="PANTHER" id="PTHR24082">
    <property type="entry name" value="NUCLEAR HORMONE RECEPTOR"/>
    <property type="match status" value="1"/>
</dbReference>
<dbReference type="PANTHER" id="PTHR24082:SF231">
    <property type="entry name" value="NUCLEAR RECEPTOR SUBFAMILY 1 GROUP I MEMBER 3"/>
    <property type="match status" value="1"/>
</dbReference>
<dbReference type="Pfam" id="PF00104">
    <property type="entry name" value="Hormone_recep"/>
    <property type="match status" value="1"/>
</dbReference>
<dbReference type="Pfam" id="PF00105">
    <property type="entry name" value="zf-C4"/>
    <property type="match status" value="1"/>
</dbReference>
<dbReference type="PRINTS" id="PR00398">
    <property type="entry name" value="STRDHORMONER"/>
</dbReference>
<dbReference type="PRINTS" id="PR00047">
    <property type="entry name" value="STROIDFINGER"/>
</dbReference>
<dbReference type="PRINTS" id="PR00546">
    <property type="entry name" value="THYROIDHORMR"/>
</dbReference>
<dbReference type="SMART" id="SM00430">
    <property type="entry name" value="HOLI"/>
    <property type="match status" value="1"/>
</dbReference>
<dbReference type="SMART" id="SM00399">
    <property type="entry name" value="ZnF_C4"/>
    <property type="match status" value="1"/>
</dbReference>
<dbReference type="SUPFAM" id="SSF57716">
    <property type="entry name" value="Glucocorticoid receptor-like (DNA-binding domain)"/>
    <property type="match status" value="1"/>
</dbReference>
<dbReference type="SUPFAM" id="SSF48508">
    <property type="entry name" value="Nuclear receptor ligand-binding domain"/>
    <property type="match status" value="1"/>
</dbReference>
<dbReference type="PROSITE" id="PS51843">
    <property type="entry name" value="NR_LBD"/>
    <property type="match status" value="1"/>
</dbReference>
<dbReference type="PROSITE" id="PS00031">
    <property type="entry name" value="NUCLEAR_REC_DBD_1"/>
    <property type="match status" value="1"/>
</dbReference>
<dbReference type="PROSITE" id="PS51030">
    <property type="entry name" value="NUCLEAR_REC_DBD_2"/>
    <property type="match status" value="1"/>
</dbReference>
<protein>
    <recommendedName>
        <fullName>Nuclear receptor subfamily 1 group I member 3</fullName>
    </recommendedName>
    <alternativeName>
        <fullName>Constitutive activator of retinoid response</fullName>
        <shortName>Constitutive active response</shortName>
    </alternativeName>
    <alternativeName>
        <fullName>Constitutive androstane receptor</fullName>
        <shortName>CAR</shortName>
    </alternativeName>
    <alternativeName>
        <fullName>Orphan nuclear receptor MB67</fullName>
    </alternativeName>
</protein>
<evidence type="ECO:0000250" key="1"/>
<evidence type="ECO:0000250" key="2">
    <source>
        <dbReference type="UniProtKB" id="O35627"/>
    </source>
</evidence>
<evidence type="ECO:0000255" key="3">
    <source>
        <dbReference type="PROSITE-ProRule" id="PRU00407"/>
    </source>
</evidence>
<evidence type="ECO:0000255" key="4">
    <source>
        <dbReference type="PROSITE-ProRule" id="PRU01189"/>
    </source>
</evidence>
<evidence type="ECO:0000269" key="5">
    <source>
    </source>
</evidence>
<evidence type="ECO:0000269" key="6">
    <source>
    </source>
</evidence>
<evidence type="ECO:0000269" key="7">
    <source>
    </source>
</evidence>
<evidence type="ECO:0000303" key="8">
    <source>
    </source>
</evidence>
<evidence type="ECO:0000303" key="9">
    <source>
    </source>
</evidence>
<evidence type="ECO:0000303" key="10">
    <source>
    </source>
</evidence>
<evidence type="ECO:0000303" key="11">
    <source ref="3"/>
</evidence>
<evidence type="ECO:0000303" key="12">
    <source ref="4"/>
</evidence>
<evidence type="ECO:0000305" key="13"/>
<evidence type="ECO:0007829" key="14">
    <source>
        <dbReference type="PDB" id="1XV9"/>
    </source>
</evidence>
<evidence type="ECO:0007829" key="15">
    <source>
        <dbReference type="PDB" id="1XVP"/>
    </source>
</evidence>
<proteinExistence type="evidence at protein level"/>
<organism>
    <name type="scientific">Homo sapiens</name>
    <name type="common">Human</name>
    <dbReference type="NCBI Taxonomy" id="9606"/>
    <lineage>
        <taxon>Eukaryota</taxon>
        <taxon>Metazoa</taxon>
        <taxon>Chordata</taxon>
        <taxon>Craniata</taxon>
        <taxon>Vertebrata</taxon>
        <taxon>Euteleostomi</taxon>
        <taxon>Mammalia</taxon>
        <taxon>Eutheria</taxon>
        <taxon>Euarchontoglires</taxon>
        <taxon>Primates</taxon>
        <taxon>Haplorrhini</taxon>
        <taxon>Catarrhini</taxon>
        <taxon>Hominidae</taxon>
        <taxon>Homo</taxon>
    </lineage>
</organism>
<gene>
    <name type="primary">NR1I3</name>
    <name type="synonym">CAR</name>
</gene>
<feature type="chain" id="PRO_0000053552" description="Nuclear receptor subfamily 1 group I member 3">
    <location>
        <begin position="1"/>
        <end position="352"/>
    </location>
</feature>
<feature type="domain" description="NR LBD" evidence="4">
    <location>
        <begin position="109"/>
        <end position="352"/>
    </location>
</feature>
<feature type="DNA-binding region" description="Nuclear receptor" evidence="3">
    <location>
        <begin position="8"/>
        <end position="83"/>
    </location>
</feature>
<feature type="zinc finger region" description="NR C4-type" evidence="3">
    <location>
        <begin position="11"/>
        <end position="31"/>
    </location>
</feature>
<feature type="zinc finger region" description="NR C4-type" evidence="3">
    <location>
        <begin position="47"/>
        <end position="71"/>
    </location>
</feature>
<feature type="modified residue" description="Phosphothreonine; by PKC" evidence="6">
    <location>
        <position position="38"/>
    </location>
</feature>
<feature type="splice variant" id="VSP_043730" description="In isoform 4, isoform 5, isoform 6, isoform 9, isoform 10, isoform 11 and isoform 15." evidence="8">
    <original>MASREDELRNCVVCGDQATGYHFNALTCEGCKGFF</original>
    <variation>MLPKRS</variation>
    <location>
        <begin position="1"/>
        <end position="35"/>
    </location>
</feature>
<feature type="splice variant" id="VSP_043144" description="In isoform 3." evidence="9 12">
    <original>VSPTVGFQVEFLELLFHFHGTLRKLQLQEPEYVLLAAMALFSP</original>
    <variation>APYLT</variation>
    <location>
        <begin position="232"/>
        <end position="274"/>
    </location>
</feature>
<feature type="splice variant" id="VSP_043731" description="In isoform 4, isoform 7, isoform 14 and isoform 15." evidence="8 9 12">
    <location>
        <begin position="232"/>
        <end position="274"/>
    </location>
</feature>
<feature type="splice variant" id="VSP_055180" description="In isoform 13." evidence="8">
    <location>
        <begin position="232"/>
        <end position="235"/>
    </location>
</feature>
<feature type="splice variant" id="VSP_010634" description="In isoform 2, isoform 5, isoform 6, isoform 9 and isoform 10." evidence="8 10 12">
    <location>
        <begin position="233"/>
        <end position="236"/>
    </location>
</feature>
<feature type="splice variant" id="VSP_043732" description="In isoform 6, isoform 8, isoform 10, isoform 11 and isoform 13." evidence="8 11">
    <original>P</original>
    <variation>PAPYLT</variation>
    <location>
        <position position="274"/>
    </location>
</feature>
<feature type="splice variant" id="VSP_046144" description="In isoform 9, isoform 10, isoform 11, isoform 12, isoform 13, isoform 14 and isoform 15." evidence="8">
    <original>FLYAKLLGLLAELRSINEAYGYQIQHIQGLSAMMPLLQEICS</original>
    <variation>SPGTPWIHWSGKMLGPKIGPGSKGAQWLQ</variation>
    <location>
        <begin position="311"/>
        <end position="352"/>
    </location>
</feature>
<feature type="sequence variant" id="VAR_018344" evidence="5">
    <original>V</original>
    <variation>G</variation>
    <location>
        <position position="133"/>
    </location>
</feature>
<feature type="sequence variant" id="VAR_080264" description="Found in a patient with Kleefstra syndrome; uncertain significance; dbSNP:rs398122411." evidence="7">
    <original>F</original>
    <variation>S</variation>
    <location>
        <position position="247"/>
    </location>
</feature>
<feature type="helix" evidence="15">
    <location>
        <begin position="108"/>
        <end position="122"/>
    </location>
</feature>
<feature type="strand" evidence="15">
    <location>
        <begin position="125"/>
        <end position="127"/>
    </location>
</feature>
<feature type="helix" evidence="15">
    <location>
        <begin position="128"/>
        <end position="135"/>
    </location>
</feature>
<feature type="helix" evidence="15">
    <location>
        <begin position="139"/>
        <end position="141"/>
    </location>
</feature>
<feature type="helix" evidence="15">
    <location>
        <begin position="155"/>
        <end position="176"/>
    </location>
</feature>
<feature type="helix" evidence="15">
    <location>
        <begin position="180"/>
        <end position="184"/>
    </location>
</feature>
<feature type="helix" evidence="15">
    <location>
        <begin position="187"/>
        <end position="206"/>
    </location>
</feature>
<feature type="helix" evidence="15">
    <location>
        <begin position="207"/>
        <end position="209"/>
    </location>
</feature>
<feature type="turn" evidence="15">
    <location>
        <begin position="212"/>
        <end position="215"/>
    </location>
</feature>
<feature type="strand" evidence="15">
    <location>
        <begin position="216"/>
        <end position="218"/>
    </location>
</feature>
<feature type="strand" evidence="14">
    <location>
        <begin position="222"/>
        <end position="224"/>
    </location>
</feature>
<feature type="helix" evidence="15">
    <location>
        <begin position="226"/>
        <end position="232"/>
    </location>
</feature>
<feature type="helix" evidence="15">
    <location>
        <begin position="240"/>
        <end position="255"/>
    </location>
</feature>
<feature type="helix" evidence="15">
    <location>
        <begin position="260"/>
        <end position="271"/>
    </location>
</feature>
<feature type="strand" evidence="15">
    <location>
        <begin position="274"/>
        <end position="276"/>
    </location>
</feature>
<feature type="helix" evidence="15">
    <location>
        <begin position="282"/>
        <end position="301"/>
    </location>
</feature>
<feature type="helix" evidence="15">
    <location>
        <begin position="312"/>
        <end position="336"/>
    </location>
</feature>
<feature type="helix" evidence="15">
    <location>
        <begin position="340"/>
        <end position="343"/>
    </location>
</feature>
<feature type="helix" evidence="15">
    <location>
        <begin position="345"/>
        <end position="350"/>
    </location>
</feature>
<reference key="1">
    <citation type="journal article" date="1994" name="Mol. Cell. Biol.">
        <title>A new orphan member of the nuclear hormone receptor superfamily that interacts with a subset of retinoic acid response elements.</title>
        <authorList>
            <person name="Baes M."/>
            <person name="Gulick T."/>
            <person name="Choi H.S."/>
            <person name="Martinoli M.G."/>
            <person name="Simha D."/>
            <person name="Moore D.D."/>
        </authorList>
    </citation>
    <scope>NUCLEOTIDE SEQUENCE [MRNA] (ISOFORM 2)</scope>
    <source>
        <tissue>Liver</tissue>
    </source>
</reference>
<reference key="2">
    <citation type="journal article" date="2004" name="J. Pharmacol. Exp. Ther.">
        <title>Expression of constitutive androstane receptor splice variants in human tissues and their functional consequences.</title>
        <authorList>
            <person name="Lamba J.K."/>
            <person name="Lamba V."/>
            <person name="Yasuda K."/>
            <person name="Lin Y.S."/>
            <person name="Assem M."/>
            <person name="Thompson E."/>
            <person name="Strom S."/>
            <person name="Schuetz E.G."/>
        </authorList>
    </citation>
    <scope>NUCLEOTIDE SEQUENCE [MRNA] (ISOFORMS 4; 5; 6 AND 7)</scope>
    <scope>NUCLEOTIDE SEQUENCE [MRNA] OF 1-288 (ISOFORM 9)</scope>
    <scope>NUCLEOTIDE SEQUENCE [MRNA] OF 1-293 (ISOFORM 10)</scope>
    <scope>NUCLEOTIDE SEQUENCE [MRNA] OF 1-297 (ISOFORM 11)</scope>
    <scope>NUCLEOTIDE SEQUENCE [MRNA] OF 1-321 (ISOFORM 12)</scope>
    <scope>NUCLEOTIDE SEQUENCE [MRNA] OF 1-322 (ISOFORM 13)</scope>
    <scope>NUCLEOTIDE SEQUENCE [MRNA] OF 1-279 (ISOFORM 14)</scope>
    <scope>NUCLEOTIDE SEQUENCE [MRNA] OF 1-266 (ISOFORM 15)</scope>
    <scope>ALTERNATIVE SPLICING</scope>
</reference>
<reference key="3">
    <citation type="submission" date="2005-04" db="EMBL/GenBank/DDBJ databases">
        <authorList>
            <person name="Zhou G."/>
            <person name="Nong W."/>
            <person name="Li H."/>
            <person name="Ke R."/>
            <person name="Shen C."/>
            <person name="Zhong G."/>
            <person name="Zheng Z."/>
            <person name="Liang M."/>
            <person name="Huang B."/>
            <person name="Lin L."/>
            <person name="Yang S."/>
        </authorList>
    </citation>
    <scope>NUCLEOTIDE SEQUENCE [MRNA] (ISOFORM 8)</scope>
</reference>
<reference key="4">
    <citation type="submission" date="2010-12" db="EMBL/GenBank/DDBJ databases">
        <title>Isolation of cDNA coding for multiple human nuclear receptor clones.</title>
        <authorList>
            <person name="Kaighin V.A."/>
            <person name="Martin A.L."/>
            <person name="Aronstam R.S."/>
        </authorList>
    </citation>
    <scope>NUCLEOTIDE SEQUENCE [LARGE SCALE MRNA] (ISOFORMS 1; 2; 3 AND 7)</scope>
    <source>
        <tissue>Eye</tissue>
        <tissue>Small intestine</tissue>
    </source>
</reference>
<reference key="5">
    <citation type="journal article" date="2006" name="Nature">
        <title>The DNA sequence and biological annotation of human chromosome 1.</title>
        <authorList>
            <person name="Gregory S.G."/>
            <person name="Barlow K.F."/>
            <person name="McLay K.E."/>
            <person name="Kaul R."/>
            <person name="Swarbreck D."/>
            <person name="Dunham A."/>
            <person name="Scott C.E."/>
            <person name="Howe K.L."/>
            <person name="Woodfine K."/>
            <person name="Spencer C.C.A."/>
            <person name="Jones M.C."/>
            <person name="Gillson C."/>
            <person name="Searle S."/>
            <person name="Zhou Y."/>
            <person name="Kokocinski F."/>
            <person name="McDonald L."/>
            <person name="Evans R."/>
            <person name="Phillips K."/>
            <person name="Atkinson A."/>
            <person name="Cooper R."/>
            <person name="Jones C."/>
            <person name="Hall R.E."/>
            <person name="Andrews T.D."/>
            <person name="Lloyd C."/>
            <person name="Ainscough R."/>
            <person name="Almeida J.P."/>
            <person name="Ambrose K.D."/>
            <person name="Anderson F."/>
            <person name="Andrew R.W."/>
            <person name="Ashwell R.I.S."/>
            <person name="Aubin K."/>
            <person name="Babbage A.K."/>
            <person name="Bagguley C.L."/>
            <person name="Bailey J."/>
            <person name="Beasley H."/>
            <person name="Bethel G."/>
            <person name="Bird C.P."/>
            <person name="Bray-Allen S."/>
            <person name="Brown J.Y."/>
            <person name="Brown A.J."/>
            <person name="Buckley D."/>
            <person name="Burton J."/>
            <person name="Bye J."/>
            <person name="Carder C."/>
            <person name="Chapman J.C."/>
            <person name="Clark S.Y."/>
            <person name="Clarke G."/>
            <person name="Clee C."/>
            <person name="Cobley V."/>
            <person name="Collier R.E."/>
            <person name="Corby N."/>
            <person name="Coville G.J."/>
            <person name="Davies J."/>
            <person name="Deadman R."/>
            <person name="Dunn M."/>
            <person name="Earthrowl M."/>
            <person name="Ellington A.G."/>
            <person name="Errington H."/>
            <person name="Frankish A."/>
            <person name="Frankland J."/>
            <person name="French L."/>
            <person name="Garner P."/>
            <person name="Garnett J."/>
            <person name="Gay L."/>
            <person name="Ghori M.R.J."/>
            <person name="Gibson R."/>
            <person name="Gilby L.M."/>
            <person name="Gillett W."/>
            <person name="Glithero R.J."/>
            <person name="Grafham D.V."/>
            <person name="Griffiths C."/>
            <person name="Griffiths-Jones S."/>
            <person name="Grocock R."/>
            <person name="Hammond S."/>
            <person name="Harrison E.S.I."/>
            <person name="Hart E."/>
            <person name="Haugen E."/>
            <person name="Heath P.D."/>
            <person name="Holmes S."/>
            <person name="Holt K."/>
            <person name="Howden P.J."/>
            <person name="Hunt A.R."/>
            <person name="Hunt S.E."/>
            <person name="Hunter G."/>
            <person name="Isherwood J."/>
            <person name="James R."/>
            <person name="Johnson C."/>
            <person name="Johnson D."/>
            <person name="Joy A."/>
            <person name="Kay M."/>
            <person name="Kershaw J.K."/>
            <person name="Kibukawa M."/>
            <person name="Kimberley A.M."/>
            <person name="King A."/>
            <person name="Knights A.J."/>
            <person name="Lad H."/>
            <person name="Laird G."/>
            <person name="Lawlor S."/>
            <person name="Leongamornlert D.A."/>
            <person name="Lloyd D.M."/>
            <person name="Loveland J."/>
            <person name="Lovell J."/>
            <person name="Lush M.J."/>
            <person name="Lyne R."/>
            <person name="Martin S."/>
            <person name="Mashreghi-Mohammadi M."/>
            <person name="Matthews L."/>
            <person name="Matthews N.S.W."/>
            <person name="McLaren S."/>
            <person name="Milne S."/>
            <person name="Mistry S."/>
            <person name="Moore M.J.F."/>
            <person name="Nickerson T."/>
            <person name="O'Dell C.N."/>
            <person name="Oliver K."/>
            <person name="Palmeiri A."/>
            <person name="Palmer S.A."/>
            <person name="Parker A."/>
            <person name="Patel D."/>
            <person name="Pearce A.V."/>
            <person name="Peck A.I."/>
            <person name="Pelan S."/>
            <person name="Phelps K."/>
            <person name="Phillimore B.J."/>
            <person name="Plumb R."/>
            <person name="Rajan J."/>
            <person name="Raymond C."/>
            <person name="Rouse G."/>
            <person name="Saenphimmachak C."/>
            <person name="Sehra H.K."/>
            <person name="Sheridan E."/>
            <person name="Shownkeen R."/>
            <person name="Sims S."/>
            <person name="Skuce C.D."/>
            <person name="Smith M."/>
            <person name="Steward C."/>
            <person name="Subramanian S."/>
            <person name="Sycamore N."/>
            <person name="Tracey A."/>
            <person name="Tromans A."/>
            <person name="Van Helmond Z."/>
            <person name="Wall M."/>
            <person name="Wallis J.M."/>
            <person name="White S."/>
            <person name="Whitehead S.L."/>
            <person name="Wilkinson J.E."/>
            <person name="Willey D.L."/>
            <person name="Williams H."/>
            <person name="Wilming L."/>
            <person name="Wray P.W."/>
            <person name="Wu Z."/>
            <person name="Coulson A."/>
            <person name="Vaudin M."/>
            <person name="Sulston J.E."/>
            <person name="Durbin R.M."/>
            <person name="Hubbard T."/>
            <person name="Wooster R."/>
            <person name="Dunham I."/>
            <person name="Carter N.P."/>
            <person name="McVean G."/>
            <person name="Ross M.T."/>
            <person name="Harrow J."/>
            <person name="Olson M.V."/>
            <person name="Beck S."/>
            <person name="Rogers J."/>
            <person name="Bentley D.R."/>
        </authorList>
    </citation>
    <scope>NUCLEOTIDE SEQUENCE [LARGE SCALE GENOMIC DNA]</scope>
</reference>
<reference key="6">
    <citation type="submission" date="2005-09" db="EMBL/GenBank/DDBJ databases">
        <authorList>
            <person name="Mural R.J."/>
            <person name="Istrail S."/>
            <person name="Sutton G.G."/>
            <person name="Florea L."/>
            <person name="Halpern A.L."/>
            <person name="Mobarry C.M."/>
            <person name="Lippert R."/>
            <person name="Walenz B."/>
            <person name="Shatkay H."/>
            <person name="Dew I."/>
            <person name="Miller J.R."/>
            <person name="Flanigan M.J."/>
            <person name="Edwards N.J."/>
            <person name="Bolanos R."/>
            <person name="Fasulo D."/>
            <person name="Halldorsson B.V."/>
            <person name="Hannenhalli S."/>
            <person name="Turner R."/>
            <person name="Yooseph S."/>
            <person name="Lu F."/>
            <person name="Nusskern D.R."/>
            <person name="Shue B.C."/>
            <person name="Zheng X.H."/>
            <person name="Zhong F."/>
            <person name="Delcher A.L."/>
            <person name="Huson D.H."/>
            <person name="Kravitz S.A."/>
            <person name="Mouchard L."/>
            <person name="Reinert K."/>
            <person name="Remington K.A."/>
            <person name="Clark A.G."/>
            <person name="Waterman M.S."/>
            <person name="Eichler E.E."/>
            <person name="Adams M.D."/>
            <person name="Hunkapiller M.W."/>
            <person name="Myers E.W."/>
            <person name="Venter J.C."/>
        </authorList>
    </citation>
    <scope>NUCLEOTIDE SEQUENCE [LARGE SCALE GENOMIC DNA]</scope>
</reference>
<reference key="7">
    <citation type="journal article" date="2004" name="Genome Res.">
        <title>The status, quality, and expansion of the NIH full-length cDNA project: the Mammalian Gene Collection (MGC).</title>
        <authorList>
            <consortium name="The MGC Project Team"/>
        </authorList>
    </citation>
    <scope>NUCLEOTIDE SEQUENCE [LARGE SCALE MRNA] (ISOFORMS 1; 3 AND 7)</scope>
</reference>
<reference key="8">
    <citation type="journal article" date="1996" name="J. Steroid Biochem. Mol. Biol.">
        <title>A component of the 26S proteasome binds on orphan member of the nuclear hormone receptor superfamily.</title>
        <authorList>
            <person name="Choi H.S."/>
            <person name="Seol W."/>
            <person name="Moore D.D."/>
        </authorList>
    </citation>
    <scope>INTERACTION WITH PSMC4</scope>
</reference>
<reference key="9">
    <citation type="journal article" date="2003" name="Mol. Pharmacol.">
        <title>Cytoplasmic accumulation of the nuclear receptor CAR by a tetratricopeptide repeat protein in HepG2 cells.</title>
        <authorList>
            <person name="Kobayashi K."/>
            <person name="Sueyoshi T."/>
            <person name="Inoue K."/>
            <person name="Moore R."/>
            <person name="Negishi M."/>
        </authorList>
    </citation>
    <scope>INTERACTION WITH DNAJC7</scope>
    <scope>SUBCELLULAR LOCATION</scope>
</reference>
<reference key="10">
    <citation type="journal article" date="2009" name="J. Biol. Chem.">
        <title>Dephosphorylation of threonine 38 is required for nuclear translocation and activation of human xenobiotic receptor CAR (NR1I3).</title>
        <authorList>
            <person name="Mutoh S."/>
            <person name="Osabe M."/>
            <person name="Inoue K."/>
            <person name="Moore R."/>
            <person name="Pedersen L."/>
            <person name="Perera L."/>
            <person name="Rebolloso Y."/>
            <person name="Sueyoshi T."/>
            <person name="Negishi M."/>
        </authorList>
    </citation>
    <scope>PHOSPHORYLATION AT THR-38</scope>
    <scope>SUBCELLULAR LOCATION</scope>
</reference>
<reference key="11">
    <citation type="journal article" date="2004" name="Mol. Cell">
        <title>A structural basis for constitutive activity in the human CAR/RXRalpha heterodimer.</title>
        <authorList>
            <person name="Xu R.X."/>
            <person name="Lambert M.H."/>
            <person name="Wisely B.B."/>
            <person name="Warren E.N."/>
            <person name="Weinert E.E."/>
            <person name="Waitt G.M."/>
            <person name="Williams J.D."/>
            <person name="Collins J.L."/>
            <person name="Moore L.B."/>
            <person name="Willson T.M."/>
            <person name="Moore J.T."/>
        </authorList>
    </citation>
    <scope>X-RAY CRYSTALLOGRAPHY (2.6 ANGSTROMS) OF 103-352</scope>
</reference>
<reference key="12">
    <citation type="journal article" date="2003" name="Drug Metab. Pharmacokinet.">
        <title>Twenty-six novel single nucleotide polymorphisms and their frequencies of the NR1I3 (CAR) gene in a Japanese population.</title>
        <authorList>
            <person name="Ikeda S."/>
            <person name="Kurose K."/>
            <person name="Ozawa S."/>
            <person name="Sai K."/>
            <person name="Hasegawa R."/>
            <person name="Komamura K."/>
            <person name="Ueno K."/>
            <person name="Kamakura S."/>
            <person name="Kitakaze M."/>
            <person name="Tomoike H."/>
            <person name="Nakajima T."/>
            <person name="Matsumoto K."/>
            <person name="Saito H."/>
            <person name="Goto Y."/>
            <person name="Kimura H."/>
            <person name="Katoh M."/>
            <person name="Sugai K."/>
            <person name="Minami N."/>
            <person name="Shirao K."/>
            <person name="Tamura T."/>
            <person name="Yamamoto N."/>
            <person name="Minami H."/>
            <person name="Ohtsu A."/>
            <person name="Yoshida T."/>
            <person name="Saijo N."/>
            <person name="Saito Y."/>
            <person name="Sawada J."/>
        </authorList>
    </citation>
    <scope>VARIANT GLY-133</scope>
</reference>
<reference key="13">
    <citation type="journal article" date="2012" name="Am. J. Hum. Genet.">
        <title>Disruption of an EHMT1-associated chromatin-modification module causes intellectual disability.</title>
        <authorList>
            <person name="Kleefstra T."/>
            <person name="Kramer J.M."/>
            <person name="Neveling K."/>
            <person name="Willemsen M.H."/>
            <person name="Koemans T.S."/>
            <person name="Vissers L.E."/>
            <person name="Wissink-Lindhout W."/>
            <person name="Fenckova M."/>
            <person name="van den Akker W.M."/>
            <person name="Kasri N.N."/>
            <person name="Nillesen W.M."/>
            <person name="Prescott T."/>
            <person name="Clark R.D."/>
            <person name="Devriendt K."/>
            <person name="van Reeuwijk J."/>
            <person name="de Brouwer A.P."/>
            <person name="Gilissen C."/>
            <person name="Zhou H."/>
            <person name="Brunner H.G."/>
            <person name="Veltman J.A."/>
            <person name="Schenck A."/>
            <person name="van Bokhoven H."/>
        </authorList>
    </citation>
    <scope>VARIANT SER-247</scope>
</reference>
<sequence>MASREDELRNCVVCGDQATGYHFNALTCEGCKGFFRRTVSKSIGPTCPFAGSCEVSKTQRRHCPACRLQKCLDAGMRKDMILSAEALALRRAKQAQRRAQQTPVQLSKEQEELIRTLLGAHTRHMGTMFEQFVQFRPPAHLFIHHQPLPTLAPVLPLVTHFADINTFMVLQVIKFTKDLPVFRSLPIEDQISLLKGAAVEICHIVLNTTFCLQTQNFLCGPLRYTIEDGARVSPTVGFQVEFLELLFHFHGTLRKLQLQEPEYVLLAAMALFSPDRPGVTQRDEIDQLQEEMALTLQSYIKGQQRRPRDRFLYAKLLGLLAELRSINEAYGYQIQHIQGLSAMMPLLQEICS</sequence>
<comment type="function">
    <text>Binds and transactivates the retinoic acid response elements that control expression of the retinoic acid receptor beta 2 and alcohol dehydrogenase 3 genes. Transactivates both the phenobarbital responsive element module of the human CYP2B6 gene and the CYP3A4 xenobiotic response element.</text>
</comment>
<comment type="subunit">
    <text evidence="2">Interacts with ECT2 (By similarity). Heterodimer of NR1I3 and RXR. Interacts with PSMC4. Directly interacts with DNAJC7. The DNAJC7-NR1I3 complex may also include HSP90 (By similarity). Interacts with CRY1 (By similarity). Interacts with CRY2 in a ligand-dependent manner (By similarity).</text>
</comment>
<comment type="interaction">
    <interactant intactId="EBI-960794">
        <id>Q14994</id>
    </interactant>
    <interactant intactId="EBI-852851">
        <id>P01100</id>
        <label>FOS</label>
    </interactant>
    <organismsDiffer>false</organismsDiffer>
    <experiments>3</experiments>
</comment>
<comment type="subcellular location">
    <subcellularLocation>
        <location>Nucleus</location>
    </subcellularLocation>
    <subcellularLocation>
        <location>Cytoplasm</location>
    </subcellularLocation>
    <subcellularLocation>
        <location>Cytoplasm</location>
        <location>Cytoskeleton</location>
    </subcellularLocation>
    <text evidence="1">Recruited to the cytoplasm by DNAJC7.</text>
</comment>
<comment type="alternative products">
    <event type="alternative splicing"/>
    <isoform>
        <id>Q14994-1</id>
        <name>1</name>
        <sequence type="displayed"/>
    </isoform>
    <isoform>
        <id>Q14994-2</id>
        <name>2</name>
        <sequence type="described" ref="VSP_010634"/>
    </isoform>
    <isoform>
        <id>Q14994-3</id>
        <name>3</name>
        <sequence type="described" ref="VSP_043144"/>
    </isoform>
    <isoform>
        <id>Q14994-4</id>
        <name>4</name>
        <sequence type="described" ref="VSP_043730 VSP_043731"/>
    </isoform>
    <isoform>
        <id>Q14994-5</id>
        <name>5</name>
        <sequence type="described" ref="VSP_043730 VSP_010634"/>
    </isoform>
    <isoform>
        <id>Q14994-6</id>
        <name>6</name>
        <sequence type="described" ref="VSP_043730 VSP_010634 VSP_043732"/>
    </isoform>
    <isoform>
        <id>Q14994-7</id>
        <name>7</name>
        <sequence type="described" ref="VSP_043731"/>
    </isoform>
    <isoform>
        <id>Q14994-8</id>
        <name>8</name>
        <sequence type="described" ref="VSP_043732"/>
    </isoform>
    <isoform>
        <id>Q14994-9</id>
        <name>9</name>
        <sequence type="described" ref="VSP_043730 VSP_010634 VSP_046144"/>
    </isoform>
    <isoform>
        <id>Q14994-10</id>
        <name>10</name>
        <sequence type="described" ref="VSP_043730 VSP_010634 VSP_043732 VSP_046144"/>
    </isoform>
    <isoform>
        <id>Q14994-11</id>
        <name>11</name>
        <sequence type="described" ref="VSP_043730 VSP_043732 VSP_046144"/>
    </isoform>
    <isoform>
        <id>Q14994-12</id>
        <name>12</name>
        <sequence type="described" ref="VSP_046144"/>
    </isoform>
    <isoform>
        <id>Q14994-13</id>
        <name>13</name>
        <sequence type="described" ref="VSP_055180 VSP_043732 VSP_046144"/>
    </isoform>
    <isoform>
        <id>Q14994-15</id>
        <name>14</name>
        <sequence type="described" ref="VSP_043731 VSP_046144"/>
    </isoform>
    <isoform>
        <id>Q14994-16</id>
        <name>15</name>
        <sequence type="described" ref="VSP_043730 VSP_043731 VSP_046144"/>
    </isoform>
</comment>
<comment type="tissue specificity">
    <text>Predominantly expressed in liver.</text>
</comment>
<comment type="induction">
    <text>By dexamethasone.</text>
</comment>
<comment type="domain">
    <text>Composed by a short N-terminal domain followed by the DNA binding, hinge, and ligand binding/dimerization domains.</text>
</comment>
<comment type="PTM">
    <text evidence="6">Phosphorylated at Thr-38 by PKC, dephosphorylation of Thr-38 is required for nuclear translocation and activation.</text>
</comment>
<comment type="similarity">
    <text evidence="13">Belongs to the nuclear hormone receptor family. NR1 subfamily.</text>
</comment>